<accession>Q8BMD8</accession>
<accession>Q3TCQ2</accession>
<accession>Q3THY3</accession>
<accession>Q7TPC2</accession>
<comment type="function">
    <text evidence="1">Electroneutral antiporter that mediates the transport of adenyl nucleotides through the inner mitochondrial membrane. Originally identified as an ATP-magnesium/inorganic phosphate antiporter, it also acts as a broad specificity adenyl nucleotide antiporter. By regulating the mitochondrial matrix adenyl nucleotide pool could adapt to changing cellular energetic demands and indirectly regulate adenyl nucleotide-dependent metabolic pathways. In vitro, a low activity is also observed with guanyl and pyrimidine nucleotides. May play a role in protecting cells against oxidative stress-induced cell death, by buffering calcium levels in the mitochondrial matrix through the formation of calcium-phosphate precipitates.</text>
</comment>
<comment type="catalytic activity">
    <reaction evidence="1">
        <text>Mg(2+)(out) + phosphate(in) + ATP(out) = Mg(2+)(in) + phosphate(out) + ATP(in)</text>
        <dbReference type="Rhea" id="RHEA:65840"/>
        <dbReference type="ChEBI" id="CHEBI:18420"/>
        <dbReference type="ChEBI" id="CHEBI:30616"/>
        <dbReference type="ChEBI" id="CHEBI:43474"/>
    </reaction>
</comment>
<comment type="catalytic activity">
    <reaction evidence="1">
        <text>ADP(out) + phosphate(in) + H(+)(out) = ADP(in) + phosphate(out) + H(+)(in)</text>
        <dbReference type="Rhea" id="RHEA:65844"/>
        <dbReference type="ChEBI" id="CHEBI:15378"/>
        <dbReference type="ChEBI" id="CHEBI:43474"/>
        <dbReference type="ChEBI" id="CHEBI:456216"/>
    </reaction>
</comment>
<comment type="catalytic activity">
    <reaction evidence="1">
        <text>AMP(out) + phosphate(in) = AMP(in) + phosphate(out)</text>
        <dbReference type="Rhea" id="RHEA:70259"/>
        <dbReference type="ChEBI" id="CHEBI:43474"/>
        <dbReference type="ChEBI" id="CHEBI:456215"/>
    </reaction>
</comment>
<comment type="catalytic activity">
    <reaction evidence="1">
        <text>phosphate(in) + ATP(out) + 2 H(+)(out) = phosphate(out) + ATP(in) + 2 H(+)(in)</text>
        <dbReference type="Rhea" id="RHEA:72035"/>
        <dbReference type="ChEBI" id="CHEBI:15378"/>
        <dbReference type="ChEBI" id="CHEBI:30616"/>
        <dbReference type="ChEBI" id="CHEBI:43474"/>
    </reaction>
</comment>
<comment type="catalytic activity">
    <reaction evidence="1">
        <text>dADP(in) + ADP(out) = dADP(out) + ADP(in)</text>
        <dbReference type="Rhea" id="RHEA:72855"/>
        <dbReference type="ChEBI" id="CHEBI:57667"/>
        <dbReference type="ChEBI" id="CHEBI:456216"/>
    </reaction>
</comment>
<comment type="catalytic activity">
    <reaction evidence="1">
        <text>Mg(2+)(in) + ADP(out) + ATP(in) + H(+)(out) = Mg(2+)(out) + ADP(in) + ATP(out) + H(+)(in)</text>
        <dbReference type="Rhea" id="RHEA:73659"/>
        <dbReference type="ChEBI" id="CHEBI:15378"/>
        <dbReference type="ChEBI" id="CHEBI:18420"/>
        <dbReference type="ChEBI" id="CHEBI:30616"/>
        <dbReference type="ChEBI" id="CHEBI:456216"/>
    </reaction>
</comment>
<comment type="catalytic activity">
    <reaction evidence="1">
        <text>ADP(out) + diphosphate(in) = ADP(in) + diphosphate(out)</text>
        <dbReference type="Rhea" id="RHEA:73671"/>
        <dbReference type="ChEBI" id="CHEBI:33019"/>
        <dbReference type="ChEBI" id="CHEBI:456216"/>
    </reaction>
</comment>
<comment type="catalytic activity">
    <reaction evidence="1">
        <text>dAMP(in) + ADP(out) + H(+)(out) = dAMP(out) + ADP(in) + H(+)(in)</text>
        <dbReference type="Rhea" id="RHEA:73675"/>
        <dbReference type="ChEBI" id="CHEBI:15378"/>
        <dbReference type="ChEBI" id="CHEBI:58245"/>
        <dbReference type="ChEBI" id="CHEBI:456216"/>
    </reaction>
</comment>
<comment type="catalytic activity">
    <reaction evidence="1">
        <text>3'-AMP(in) + ADP(out) + H(+)(out) = 3'-AMP(out) + ADP(in) + H(+)(in)</text>
        <dbReference type="Rhea" id="RHEA:73679"/>
        <dbReference type="ChEBI" id="CHEBI:15378"/>
        <dbReference type="ChEBI" id="CHEBI:60880"/>
        <dbReference type="ChEBI" id="CHEBI:456216"/>
    </reaction>
</comment>
<comment type="catalytic activity">
    <reaction evidence="1">
        <text>dAMP(out) + phosphate(in) = dAMP(in) + phosphate(out)</text>
        <dbReference type="Rhea" id="RHEA:73687"/>
        <dbReference type="ChEBI" id="CHEBI:43474"/>
        <dbReference type="ChEBI" id="CHEBI:58245"/>
    </reaction>
</comment>
<comment type="catalytic activity">
    <reaction evidence="1">
        <text>3'-AMP(out) + phosphate(in) = 3'-AMP(in) + phosphate(out)</text>
        <dbReference type="Rhea" id="RHEA:73691"/>
        <dbReference type="ChEBI" id="CHEBI:43474"/>
        <dbReference type="ChEBI" id="CHEBI:60880"/>
    </reaction>
</comment>
<comment type="catalytic activity">
    <reaction evidence="1">
        <text>dADP(out) + phosphate(in) + H(+)(out) = dADP(in) + phosphate(out) + H(+)(in)</text>
        <dbReference type="Rhea" id="RHEA:73695"/>
        <dbReference type="ChEBI" id="CHEBI:15378"/>
        <dbReference type="ChEBI" id="CHEBI:43474"/>
        <dbReference type="ChEBI" id="CHEBI:57667"/>
    </reaction>
</comment>
<comment type="activity regulation">
    <text evidence="1">Activated by an increase in cytosolic calcium levels that induce a conformational change of the N-terminal regulatory domain, uncapping the channel and allowing transport. Inhibited by bathophenanthroline, mersalyl, p-hydroxymercuribenzoate, bromcresol purple and tannic acid.</text>
</comment>
<comment type="subunit">
    <text evidence="1">Monomer.</text>
</comment>
<comment type="subcellular location">
    <subcellularLocation>
        <location evidence="7">Mitochondrion inner membrane</location>
        <topology evidence="2">Multi-pass membrane protein</topology>
    </subcellularLocation>
</comment>
<comment type="domain">
    <text evidence="1">The regulatory N-terminal domain/NTD formed of two pairs of fused calcium-binding EF-hands, binds calcium in the mitochondrial intermembrane space and regulates the antiporter activity of the transmembrane domain/TMD. In absence of calcium, the apo form of the N-terminal domain is intrinsically disordered and binds to the transmembrane domain, inhibiting the transporter activity. Binding of calcium leads to a major conformational change and abolishes the interaction with the transmembrane domain and the inhibition of the transporter activity.</text>
</comment>
<comment type="domain">
    <text evidence="1">The C-terminal mitochondrial carrier domain/transmembrane domain/TMD bears the transmembrane transporter activity.</text>
</comment>
<comment type="domain">
    <text evidence="1">Linker region/H9 could directly block the transport of substrates across the transporter.</text>
</comment>
<comment type="similarity">
    <text evidence="6">Belongs to the mitochondrial carrier (TC 2.A.29) family.</text>
</comment>
<evidence type="ECO:0000250" key="1">
    <source>
        <dbReference type="UniProtKB" id="Q6NUK1"/>
    </source>
</evidence>
<evidence type="ECO:0000255" key="2"/>
<evidence type="ECO:0000255" key="3">
    <source>
        <dbReference type="PROSITE-ProRule" id="PRU00282"/>
    </source>
</evidence>
<evidence type="ECO:0000255" key="4">
    <source>
        <dbReference type="PROSITE-ProRule" id="PRU00448"/>
    </source>
</evidence>
<evidence type="ECO:0000303" key="5">
    <source>
    </source>
</evidence>
<evidence type="ECO:0000305" key="6"/>
<evidence type="ECO:0000305" key="7">
    <source>
    </source>
</evidence>
<evidence type="ECO:0000312" key="8">
    <source>
        <dbReference type="MGI" id="MGI:1917160"/>
    </source>
</evidence>
<evidence type="ECO:0007744" key="9">
    <source>
    </source>
</evidence>
<feature type="chain" id="PRO_0000317595" description="Mitochondrial adenyl nucleotide antiporter SLC25A24">
    <location>
        <begin position="1"/>
        <end position="475"/>
    </location>
</feature>
<feature type="topological domain" description="Mitochondrial intermembrane" evidence="1">
    <location>
        <begin position="1"/>
        <end position="197"/>
    </location>
</feature>
<feature type="transmembrane region" description="Helical; Name=1" evidence="2">
    <location>
        <begin position="198"/>
        <end position="215"/>
    </location>
</feature>
<feature type="topological domain" description="Mitochondrial matrix" evidence="1">
    <location>
        <begin position="216"/>
        <end position="250"/>
    </location>
</feature>
<feature type="transmembrane region" description="Helical; Name=2" evidence="2">
    <location>
        <begin position="251"/>
        <end position="270"/>
    </location>
</feature>
<feature type="topological domain" description="Mitochondrial intermembrane" evidence="1">
    <location>
        <begin position="271"/>
        <end position="293"/>
    </location>
</feature>
<feature type="transmembrane region" description="Helical; Name=3" evidence="2">
    <location>
        <begin position="294"/>
        <end position="307"/>
    </location>
</feature>
<feature type="topological domain" description="Mitochondrial matrix" evidence="1">
    <location>
        <begin position="308"/>
        <end position="343"/>
    </location>
</feature>
<feature type="transmembrane region" description="Helical; Name=4" evidence="2">
    <location>
        <begin position="344"/>
        <end position="363"/>
    </location>
</feature>
<feature type="topological domain" description="Mitochondrial intermembrane" evidence="1">
    <location>
        <begin position="364"/>
        <end position="386"/>
    </location>
</feature>
<feature type="transmembrane region" description="Helical; Name=5" evidence="2">
    <location>
        <begin position="387"/>
        <end position="404"/>
    </location>
</feature>
<feature type="topological domain" description="Mitochondrial matrix" evidence="1">
    <location>
        <begin position="405"/>
        <end position="443"/>
    </location>
</feature>
<feature type="transmembrane region" description="Helical; Name=6" evidence="2">
    <location>
        <begin position="444"/>
        <end position="463"/>
    </location>
</feature>
<feature type="topological domain" description="Mitochondrial intermembrane" evidence="1">
    <location>
        <begin position="464"/>
        <end position="475"/>
    </location>
</feature>
<feature type="domain" description="EF-hand 1" evidence="4">
    <location>
        <begin position="19"/>
        <end position="54"/>
    </location>
</feature>
<feature type="domain" description="EF-hand 2" evidence="4">
    <location>
        <begin position="55"/>
        <end position="88"/>
    </location>
</feature>
<feature type="domain" description="EF-hand 3" evidence="4">
    <location>
        <begin position="86"/>
        <end position="121"/>
    </location>
</feature>
<feature type="domain" description="EF-hand 4" evidence="4">
    <location>
        <begin position="122"/>
        <end position="157"/>
    </location>
</feature>
<feature type="repeat" description="Solcar 1" evidence="3">
    <location>
        <begin position="192"/>
        <end position="276"/>
    </location>
</feature>
<feature type="repeat" description="Solcar 2" evidence="3">
    <location>
        <begin position="284"/>
        <end position="369"/>
    </location>
</feature>
<feature type="repeat" description="Solcar 3" evidence="3">
    <location>
        <begin position="381"/>
        <end position="469"/>
    </location>
</feature>
<feature type="region of interest" description="Regulatory N-terminal domain" evidence="1">
    <location>
        <begin position="1"/>
        <end position="173"/>
    </location>
</feature>
<feature type="region of interest" description="Linker region" evidence="1">
    <location>
        <begin position="159"/>
        <end position="168"/>
    </location>
</feature>
<feature type="region of interest" description="C-terminal transmembrane transporter domain" evidence="1">
    <location>
        <begin position="174"/>
        <end position="475"/>
    </location>
</feature>
<feature type="binding site" evidence="4">
    <location>
        <position position="32"/>
    </location>
    <ligand>
        <name>Ca(2+)</name>
        <dbReference type="ChEBI" id="CHEBI:29108"/>
        <label>1</label>
    </ligand>
</feature>
<feature type="binding site" evidence="4">
    <location>
        <position position="34"/>
    </location>
    <ligand>
        <name>Ca(2+)</name>
        <dbReference type="ChEBI" id="CHEBI:29108"/>
        <label>1</label>
    </ligand>
</feature>
<feature type="binding site" evidence="4">
    <location>
        <position position="36"/>
    </location>
    <ligand>
        <name>Ca(2+)</name>
        <dbReference type="ChEBI" id="CHEBI:29108"/>
        <label>1</label>
    </ligand>
</feature>
<feature type="binding site" evidence="1">
    <location>
        <position position="38"/>
    </location>
    <ligand>
        <name>Ca(2+)</name>
        <dbReference type="ChEBI" id="CHEBI:29108"/>
        <label>1</label>
    </ligand>
</feature>
<feature type="binding site" evidence="4">
    <location>
        <position position="43"/>
    </location>
    <ligand>
        <name>Ca(2+)</name>
        <dbReference type="ChEBI" id="CHEBI:29108"/>
        <label>1</label>
    </ligand>
</feature>
<feature type="binding site" evidence="4">
    <location>
        <position position="68"/>
    </location>
    <ligand>
        <name>Ca(2+)</name>
        <dbReference type="ChEBI" id="CHEBI:29108"/>
        <label>2</label>
    </ligand>
</feature>
<feature type="binding site" evidence="4">
    <location>
        <position position="70"/>
    </location>
    <ligand>
        <name>Ca(2+)</name>
        <dbReference type="ChEBI" id="CHEBI:29108"/>
        <label>2</label>
    </ligand>
</feature>
<feature type="binding site" evidence="4">
    <location>
        <position position="72"/>
    </location>
    <ligand>
        <name>Ca(2+)</name>
        <dbReference type="ChEBI" id="CHEBI:29108"/>
        <label>2</label>
    </ligand>
</feature>
<feature type="binding site" evidence="4">
    <location>
        <position position="74"/>
    </location>
    <ligand>
        <name>Ca(2+)</name>
        <dbReference type="ChEBI" id="CHEBI:29108"/>
        <label>2</label>
    </ligand>
</feature>
<feature type="binding site" evidence="4">
    <location>
        <position position="79"/>
    </location>
    <ligand>
        <name>Ca(2+)</name>
        <dbReference type="ChEBI" id="CHEBI:29108"/>
        <label>2</label>
    </ligand>
</feature>
<feature type="binding site" evidence="4">
    <location>
        <position position="99"/>
    </location>
    <ligand>
        <name>Ca(2+)</name>
        <dbReference type="ChEBI" id="CHEBI:29108"/>
        <label>3</label>
    </ligand>
</feature>
<feature type="binding site" evidence="4">
    <location>
        <position position="101"/>
    </location>
    <ligand>
        <name>Ca(2+)</name>
        <dbReference type="ChEBI" id="CHEBI:29108"/>
        <label>3</label>
    </ligand>
</feature>
<feature type="binding site" evidence="4">
    <location>
        <position position="103"/>
    </location>
    <ligand>
        <name>Ca(2+)</name>
        <dbReference type="ChEBI" id="CHEBI:29108"/>
        <label>3</label>
    </ligand>
</feature>
<feature type="binding site" evidence="4">
    <location>
        <position position="105"/>
    </location>
    <ligand>
        <name>Ca(2+)</name>
        <dbReference type="ChEBI" id="CHEBI:29108"/>
        <label>3</label>
    </ligand>
</feature>
<feature type="binding site" evidence="4">
    <location>
        <position position="110"/>
    </location>
    <ligand>
        <name>Ca(2+)</name>
        <dbReference type="ChEBI" id="CHEBI:29108"/>
        <label>3</label>
    </ligand>
</feature>
<feature type="binding site" evidence="1">
    <location>
        <position position="135"/>
    </location>
    <ligand>
        <name>Ca(2+)</name>
        <dbReference type="ChEBI" id="CHEBI:29108"/>
        <label>4</label>
    </ligand>
</feature>
<feature type="binding site" evidence="1">
    <location>
        <position position="137"/>
    </location>
    <ligand>
        <name>Ca(2+)</name>
        <dbReference type="ChEBI" id="CHEBI:29108"/>
        <label>4</label>
    </ligand>
</feature>
<feature type="binding site" evidence="1">
    <location>
        <position position="139"/>
    </location>
    <ligand>
        <name>Ca(2+)</name>
        <dbReference type="ChEBI" id="CHEBI:29108"/>
        <label>4</label>
    </ligand>
</feature>
<feature type="binding site" evidence="1">
    <location>
        <position position="141"/>
    </location>
    <ligand>
        <name>Ca(2+)</name>
        <dbReference type="ChEBI" id="CHEBI:29108"/>
        <label>4</label>
    </ligand>
</feature>
<feature type="binding site" evidence="1">
    <location>
        <position position="146"/>
    </location>
    <ligand>
        <name>Ca(2+)</name>
        <dbReference type="ChEBI" id="CHEBI:29108"/>
        <label>4</label>
    </ligand>
</feature>
<feature type="modified residue" description="N6-acetyllysine; alternate" evidence="9">
    <location>
        <position position="318"/>
    </location>
</feature>
<feature type="modified residue" description="N6-succinyllysine; alternate" evidence="9">
    <location>
        <position position="318"/>
    </location>
</feature>
<feature type="modified residue" description="N6-acetyllysine" evidence="1">
    <location>
        <position position="334"/>
    </location>
</feature>
<feature type="modified residue" description="N6-acetyllysine; alternate" evidence="9">
    <location>
        <position position="435"/>
    </location>
</feature>
<feature type="modified residue" description="N6-succinyllysine; alternate" evidence="9">
    <location>
        <position position="435"/>
    </location>
</feature>
<feature type="sequence conflict" description="In Ref. 1; BAE40063/BAE39810." evidence="6" ref="1">
    <original>L</original>
    <variation>F</variation>
    <location>
        <position position="27"/>
    </location>
</feature>
<feature type="sequence conflict" description="In Ref. 3; AAH55369." evidence="6" ref="3">
    <original>S</original>
    <variation>G</variation>
    <location>
        <position position="133"/>
    </location>
</feature>
<feature type="sequence conflict" description="In Ref. 1; BAE41903." evidence="6" ref="1">
    <original>K</original>
    <variation>E</variation>
    <location>
        <position position="475"/>
    </location>
</feature>
<gene>
    <name evidence="8" type="primary">Slc25a24</name>
    <name type="synonym">Scamc1</name>
</gene>
<dbReference type="EMBL" id="AK032806">
    <property type="protein sequence ID" value="BAC28031.1"/>
    <property type="molecule type" value="mRNA"/>
</dbReference>
<dbReference type="EMBL" id="AK146034">
    <property type="protein sequence ID" value="BAE26847.1"/>
    <property type="molecule type" value="mRNA"/>
</dbReference>
<dbReference type="EMBL" id="AK167778">
    <property type="protein sequence ID" value="BAE39810.1"/>
    <property type="molecule type" value="mRNA"/>
</dbReference>
<dbReference type="EMBL" id="AK168090">
    <property type="protein sequence ID" value="BAE40063.1"/>
    <property type="molecule type" value="mRNA"/>
</dbReference>
<dbReference type="EMBL" id="AK170598">
    <property type="protein sequence ID" value="BAE41903.1"/>
    <property type="molecule type" value="mRNA"/>
</dbReference>
<dbReference type="EMBL" id="AL671921">
    <property type="status" value="NOT_ANNOTATED_CDS"/>
    <property type="molecule type" value="Genomic_DNA"/>
</dbReference>
<dbReference type="EMBL" id="AL845310">
    <property type="status" value="NOT_ANNOTATED_CDS"/>
    <property type="molecule type" value="Genomic_DNA"/>
</dbReference>
<dbReference type="EMBL" id="CT010461">
    <property type="status" value="NOT_ANNOTATED_CDS"/>
    <property type="molecule type" value="Genomic_DNA"/>
</dbReference>
<dbReference type="EMBL" id="BC055369">
    <property type="protein sequence ID" value="AAH55369.1"/>
    <property type="molecule type" value="mRNA"/>
</dbReference>
<dbReference type="CCDS" id="CCDS17772.1"/>
<dbReference type="RefSeq" id="NP_766273.1">
    <property type="nucleotide sequence ID" value="NM_172685.3"/>
</dbReference>
<dbReference type="SMR" id="Q8BMD8"/>
<dbReference type="BioGRID" id="230896">
    <property type="interactions" value="5"/>
</dbReference>
<dbReference type="FunCoup" id="Q8BMD8">
    <property type="interactions" value="2572"/>
</dbReference>
<dbReference type="STRING" id="10090.ENSMUSP00000029477"/>
<dbReference type="iPTMnet" id="Q8BMD8"/>
<dbReference type="MetOSite" id="Q8BMD8"/>
<dbReference type="PhosphoSitePlus" id="Q8BMD8"/>
<dbReference type="SwissPalm" id="Q8BMD8"/>
<dbReference type="PaxDb" id="10090-ENSMUSP00000029477"/>
<dbReference type="PeptideAtlas" id="Q8BMD8"/>
<dbReference type="ProteomicsDB" id="256712"/>
<dbReference type="Pumba" id="Q8BMD8"/>
<dbReference type="Antibodypedia" id="33722">
    <property type="antibodies" value="134 antibodies from 24 providers"/>
</dbReference>
<dbReference type="DNASU" id="229731"/>
<dbReference type="Ensembl" id="ENSMUST00000029477.11">
    <property type="protein sequence ID" value="ENSMUSP00000029477.7"/>
    <property type="gene ID" value="ENSMUSG00000040322.11"/>
</dbReference>
<dbReference type="GeneID" id="229731"/>
<dbReference type="KEGG" id="mmu:229731"/>
<dbReference type="UCSC" id="uc008rae.1">
    <property type="organism name" value="mouse"/>
</dbReference>
<dbReference type="AGR" id="MGI:1917160"/>
<dbReference type="CTD" id="29957"/>
<dbReference type="MGI" id="MGI:1917160">
    <property type="gene designation" value="Slc25a24"/>
</dbReference>
<dbReference type="VEuPathDB" id="HostDB:ENSMUSG00000040322"/>
<dbReference type="eggNOG" id="KOG0036">
    <property type="taxonomic scope" value="Eukaryota"/>
</dbReference>
<dbReference type="GeneTree" id="ENSGT00940000158786"/>
<dbReference type="HOGENOM" id="CLU_015166_2_0_1"/>
<dbReference type="InParanoid" id="Q8BMD8"/>
<dbReference type="OMA" id="SGQWWKQ"/>
<dbReference type="OrthoDB" id="270584at2759"/>
<dbReference type="PhylomeDB" id="Q8BMD8"/>
<dbReference type="TreeFam" id="TF313492"/>
<dbReference type="BioGRID-ORCS" id="229731">
    <property type="hits" value="3 hits in 77 CRISPR screens"/>
</dbReference>
<dbReference type="ChiTaRS" id="Slc25a24">
    <property type="organism name" value="mouse"/>
</dbReference>
<dbReference type="PRO" id="PR:Q8BMD8"/>
<dbReference type="Proteomes" id="UP000000589">
    <property type="component" value="Chromosome 3"/>
</dbReference>
<dbReference type="RNAct" id="Q8BMD8">
    <property type="molecule type" value="protein"/>
</dbReference>
<dbReference type="Bgee" id="ENSMUSG00000040322">
    <property type="expression patterns" value="Expressed in left colon and 207 other cell types or tissues"/>
</dbReference>
<dbReference type="ExpressionAtlas" id="Q8BMD8">
    <property type="expression patterns" value="baseline and differential"/>
</dbReference>
<dbReference type="GO" id="GO:0016020">
    <property type="term" value="C:membrane"/>
    <property type="evidence" value="ECO:0000250"/>
    <property type="project" value="UniProtKB"/>
</dbReference>
<dbReference type="GO" id="GO:0005743">
    <property type="term" value="C:mitochondrial inner membrane"/>
    <property type="evidence" value="ECO:0007669"/>
    <property type="project" value="UniProtKB-SubCell"/>
</dbReference>
<dbReference type="GO" id="GO:0005739">
    <property type="term" value="C:mitochondrion"/>
    <property type="evidence" value="ECO:0000314"/>
    <property type="project" value="UniProtKB"/>
</dbReference>
<dbReference type="GO" id="GO:0000295">
    <property type="term" value="F:adenine nucleotide transmembrane transporter activity"/>
    <property type="evidence" value="ECO:0000250"/>
    <property type="project" value="UniProtKB"/>
</dbReference>
<dbReference type="GO" id="GO:0140988">
    <property type="term" value="F:ADP:phosphate antiporter activity"/>
    <property type="evidence" value="ECO:0000250"/>
    <property type="project" value="UniProtKB"/>
</dbReference>
<dbReference type="GO" id="GO:0140987">
    <property type="term" value="F:ATP:phosphate antiporter activity"/>
    <property type="evidence" value="ECO:0000250"/>
    <property type="project" value="UniProtKB"/>
</dbReference>
<dbReference type="GO" id="GO:0005509">
    <property type="term" value="F:calcium ion binding"/>
    <property type="evidence" value="ECO:0000250"/>
    <property type="project" value="UniProtKB"/>
</dbReference>
<dbReference type="GO" id="GO:0051503">
    <property type="term" value="P:adenine nucleotide transport"/>
    <property type="evidence" value="ECO:0000250"/>
    <property type="project" value="UniProtKB"/>
</dbReference>
<dbReference type="GO" id="GO:0071277">
    <property type="term" value="P:cellular response to calcium ion"/>
    <property type="evidence" value="ECO:0000250"/>
    <property type="project" value="UniProtKB"/>
</dbReference>
<dbReference type="GO" id="GO:0034599">
    <property type="term" value="P:cellular response to oxidative stress"/>
    <property type="evidence" value="ECO:0007669"/>
    <property type="project" value="Ensembl"/>
</dbReference>
<dbReference type="GO" id="GO:1990544">
    <property type="term" value="P:mitochondrial ATP transmembrane transport"/>
    <property type="evidence" value="ECO:0000250"/>
    <property type="project" value="UniProtKB"/>
</dbReference>
<dbReference type="FunFam" id="1.10.238.10:FF:000028">
    <property type="entry name" value="Putative calcium-binding mitochondrial carrier protein scamc-2"/>
    <property type="match status" value="1"/>
</dbReference>
<dbReference type="FunFam" id="1.50.40.10:FF:000003">
    <property type="entry name" value="Putative calcium-binding mitochondrial carrier protein scamc-2"/>
    <property type="match status" value="1"/>
</dbReference>
<dbReference type="FunFam" id="1.10.238.10:FF:000168">
    <property type="entry name" value="Solute carrier family 25 member 24"/>
    <property type="match status" value="1"/>
</dbReference>
<dbReference type="Gene3D" id="1.10.238.10">
    <property type="entry name" value="EF-hand"/>
    <property type="match status" value="2"/>
</dbReference>
<dbReference type="Gene3D" id="1.50.40.10">
    <property type="entry name" value="Mitochondrial carrier domain"/>
    <property type="match status" value="1"/>
</dbReference>
<dbReference type="InterPro" id="IPR011992">
    <property type="entry name" value="EF-hand-dom_pair"/>
</dbReference>
<dbReference type="InterPro" id="IPR018247">
    <property type="entry name" value="EF_Hand_1_Ca_BS"/>
</dbReference>
<dbReference type="InterPro" id="IPR002048">
    <property type="entry name" value="EF_hand_dom"/>
</dbReference>
<dbReference type="InterPro" id="IPR002167">
    <property type="entry name" value="GDC-like"/>
</dbReference>
<dbReference type="InterPro" id="IPR002067">
    <property type="entry name" value="Mit_carrier"/>
</dbReference>
<dbReference type="InterPro" id="IPR018108">
    <property type="entry name" value="Mitochondrial_sb/sol_carrier"/>
</dbReference>
<dbReference type="InterPro" id="IPR023395">
    <property type="entry name" value="Mt_carrier_dom_sf"/>
</dbReference>
<dbReference type="PANTHER" id="PTHR24089">
    <property type="entry name" value="SOLUTE CARRIER FAMILY 25"/>
    <property type="match status" value="1"/>
</dbReference>
<dbReference type="Pfam" id="PF13499">
    <property type="entry name" value="EF-hand_7"/>
    <property type="match status" value="2"/>
</dbReference>
<dbReference type="Pfam" id="PF00153">
    <property type="entry name" value="Mito_carr"/>
    <property type="match status" value="3"/>
</dbReference>
<dbReference type="PRINTS" id="PR00928">
    <property type="entry name" value="GRAVESDC"/>
</dbReference>
<dbReference type="PRINTS" id="PR00926">
    <property type="entry name" value="MITOCARRIER"/>
</dbReference>
<dbReference type="SMART" id="SM00054">
    <property type="entry name" value="EFh"/>
    <property type="match status" value="3"/>
</dbReference>
<dbReference type="SUPFAM" id="SSF47473">
    <property type="entry name" value="EF-hand"/>
    <property type="match status" value="1"/>
</dbReference>
<dbReference type="SUPFAM" id="SSF103506">
    <property type="entry name" value="Mitochondrial carrier"/>
    <property type="match status" value="1"/>
</dbReference>
<dbReference type="PROSITE" id="PS00018">
    <property type="entry name" value="EF_HAND_1"/>
    <property type="match status" value="3"/>
</dbReference>
<dbReference type="PROSITE" id="PS50222">
    <property type="entry name" value="EF_HAND_2"/>
    <property type="match status" value="4"/>
</dbReference>
<dbReference type="PROSITE" id="PS50920">
    <property type="entry name" value="SOLCAR"/>
    <property type="match status" value="3"/>
</dbReference>
<protein>
    <recommendedName>
        <fullName evidence="1">Mitochondrial adenyl nucleotide antiporter SLC25A24</fullName>
    </recommendedName>
    <alternativeName>
        <fullName evidence="5">Small calcium-binding mitochondrial carrier protein 1</fullName>
        <shortName evidence="5">SCaMC-1</shortName>
    </alternativeName>
    <alternativeName>
        <fullName evidence="8">Solute carrier family 25 member 24</fullName>
    </alternativeName>
</protein>
<organism>
    <name type="scientific">Mus musculus</name>
    <name type="common">Mouse</name>
    <dbReference type="NCBI Taxonomy" id="10090"/>
    <lineage>
        <taxon>Eukaryota</taxon>
        <taxon>Metazoa</taxon>
        <taxon>Chordata</taxon>
        <taxon>Craniata</taxon>
        <taxon>Vertebrata</taxon>
        <taxon>Euteleostomi</taxon>
        <taxon>Mammalia</taxon>
        <taxon>Eutheria</taxon>
        <taxon>Euarchontoglires</taxon>
        <taxon>Glires</taxon>
        <taxon>Rodentia</taxon>
        <taxon>Myomorpha</taxon>
        <taxon>Muroidea</taxon>
        <taxon>Muridae</taxon>
        <taxon>Murinae</taxon>
        <taxon>Mus</taxon>
        <taxon>Mus</taxon>
    </lineage>
</organism>
<name>SCMC1_MOUSE</name>
<reference key="1">
    <citation type="journal article" date="2005" name="Science">
        <title>The transcriptional landscape of the mammalian genome.</title>
        <authorList>
            <person name="Carninci P."/>
            <person name="Kasukawa T."/>
            <person name="Katayama S."/>
            <person name="Gough J."/>
            <person name="Frith M.C."/>
            <person name="Maeda N."/>
            <person name="Oyama R."/>
            <person name="Ravasi T."/>
            <person name="Lenhard B."/>
            <person name="Wells C."/>
            <person name="Kodzius R."/>
            <person name="Shimokawa K."/>
            <person name="Bajic V.B."/>
            <person name="Brenner S.E."/>
            <person name="Batalov S."/>
            <person name="Forrest A.R."/>
            <person name="Zavolan M."/>
            <person name="Davis M.J."/>
            <person name="Wilming L.G."/>
            <person name="Aidinis V."/>
            <person name="Allen J.E."/>
            <person name="Ambesi-Impiombato A."/>
            <person name="Apweiler R."/>
            <person name="Aturaliya R.N."/>
            <person name="Bailey T.L."/>
            <person name="Bansal M."/>
            <person name="Baxter L."/>
            <person name="Beisel K.W."/>
            <person name="Bersano T."/>
            <person name="Bono H."/>
            <person name="Chalk A.M."/>
            <person name="Chiu K.P."/>
            <person name="Choudhary V."/>
            <person name="Christoffels A."/>
            <person name="Clutterbuck D.R."/>
            <person name="Crowe M.L."/>
            <person name="Dalla E."/>
            <person name="Dalrymple B.P."/>
            <person name="de Bono B."/>
            <person name="Della Gatta G."/>
            <person name="di Bernardo D."/>
            <person name="Down T."/>
            <person name="Engstrom P."/>
            <person name="Fagiolini M."/>
            <person name="Faulkner G."/>
            <person name="Fletcher C.F."/>
            <person name="Fukushima T."/>
            <person name="Furuno M."/>
            <person name="Futaki S."/>
            <person name="Gariboldi M."/>
            <person name="Georgii-Hemming P."/>
            <person name="Gingeras T.R."/>
            <person name="Gojobori T."/>
            <person name="Green R.E."/>
            <person name="Gustincich S."/>
            <person name="Harbers M."/>
            <person name="Hayashi Y."/>
            <person name="Hensch T.K."/>
            <person name="Hirokawa N."/>
            <person name="Hill D."/>
            <person name="Huminiecki L."/>
            <person name="Iacono M."/>
            <person name="Ikeo K."/>
            <person name="Iwama A."/>
            <person name="Ishikawa T."/>
            <person name="Jakt M."/>
            <person name="Kanapin A."/>
            <person name="Katoh M."/>
            <person name="Kawasawa Y."/>
            <person name="Kelso J."/>
            <person name="Kitamura H."/>
            <person name="Kitano H."/>
            <person name="Kollias G."/>
            <person name="Krishnan S.P."/>
            <person name="Kruger A."/>
            <person name="Kummerfeld S.K."/>
            <person name="Kurochkin I.V."/>
            <person name="Lareau L.F."/>
            <person name="Lazarevic D."/>
            <person name="Lipovich L."/>
            <person name="Liu J."/>
            <person name="Liuni S."/>
            <person name="McWilliam S."/>
            <person name="Madan Babu M."/>
            <person name="Madera M."/>
            <person name="Marchionni L."/>
            <person name="Matsuda H."/>
            <person name="Matsuzawa S."/>
            <person name="Miki H."/>
            <person name="Mignone F."/>
            <person name="Miyake S."/>
            <person name="Morris K."/>
            <person name="Mottagui-Tabar S."/>
            <person name="Mulder N."/>
            <person name="Nakano N."/>
            <person name="Nakauchi H."/>
            <person name="Ng P."/>
            <person name="Nilsson R."/>
            <person name="Nishiguchi S."/>
            <person name="Nishikawa S."/>
            <person name="Nori F."/>
            <person name="Ohara O."/>
            <person name="Okazaki Y."/>
            <person name="Orlando V."/>
            <person name="Pang K.C."/>
            <person name="Pavan W.J."/>
            <person name="Pavesi G."/>
            <person name="Pesole G."/>
            <person name="Petrovsky N."/>
            <person name="Piazza S."/>
            <person name="Reed J."/>
            <person name="Reid J.F."/>
            <person name="Ring B.Z."/>
            <person name="Ringwald M."/>
            <person name="Rost B."/>
            <person name="Ruan Y."/>
            <person name="Salzberg S.L."/>
            <person name="Sandelin A."/>
            <person name="Schneider C."/>
            <person name="Schoenbach C."/>
            <person name="Sekiguchi K."/>
            <person name="Semple C.A."/>
            <person name="Seno S."/>
            <person name="Sessa L."/>
            <person name="Sheng Y."/>
            <person name="Shibata Y."/>
            <person name="Shimada H."/>
            <person name="Shimada K."/>
            <person name="Silva D."/>
            <person name="Sinclair B."/>
            <person name="Sperling S."/>
            <person name="Stupka E."/>
            <person name="Sugiura K."/>
            <person name="Sultana R."/>
            <person name="Takenaka Y."/>
            <person name="Taki K."/>
            <person name="Tammoja K."/>
            <person name="Tan S.L."/>
            <person name="Tang S."/>
            <person name="Taylor M.S."/>
            <person name="Tegner J."/>
            <person name="Teichmann S.A."/>
            <person name="Ueda H.R."/>
            <person name="van Nimwegen E."/>
            <person name="Verardo R."/>
            <person name="Wei C.L."/>
            <person name="Yagi K."/>
            <person name="Yamanishi H."/>
            <person name="Zabarovsky E."/>
            <person name="Zhu S."/>
            <person name="Zimmer A."/>
            <person name="Hide W."/>
            <person name="Bult C."/>
            <person name="Grimmond S.M."/>
            <person name="Teasdale R.D."/>
            <person name="Liu E.T."/>
            <person name="Brusic V."/>
            <person name="Quackenbush J."/>
            <person name="Wahlestedt C."/>
            <person name="Mattick J.S."/>
            <person name="Hume D.A."/>
            <person name="Kai C."/>
            <person name="Sasaki D."/>
            <person name="Tomaru Y."/>
            <person name="Fukuda S."/>
            <person name="Kanamori-Katayama M."/>
            <person name="Suzuki M."/>
            <person name="Aoki J."/>
            <person name="Arakawa T."/>
            <person name="Iida J."/>
            <person name="Imamura K."/>
            <person name="Itoh M."/>
            <person name="Kato T."/>
            <person name="Kawaji H."/>
            <person name="Kawagashira N."/>
            <person name="Kawashima T."/>
            <person name="Kojima M."/>
            <person name="Kondo S."/>
            <person name="Konno H."/>
            <person name="Nakano K."/>
            <person name="Ninomiya N."/>
            <person name="Nishio T."/>
            <person name="Okada M."/>
            <person name="Plessy C."/>
            <person name="Shibata K."/>
            <person name="Shiraki T."/>
            <person name="Suzuki S."/>
            <person name="Tagami M."/>
            <person name="Waki K."/>
            <person name="Watahiki A."/>
            <person name="Okamura-Oho Y."/>
            <person name="Suzuki H."/>
            <person name="Kawai J."/>
            <person name="Hayashizaki Y."/>
        </authorList>
    </citation>
    <scope>NUCLEOTIDE SEQUENCE [LARGE SCALE MRNA]</scope>
    <source>
        <strain>BALB/cJ</strain>
        <strain>C57BL/6J</strain>
        <strain>NOD</strain>
        <tissue>Placenta</tissue>
        <tissue>Wolffian duct</tissue>
    </source>
</reference>
<reference key="2">
    <citation type="journal article" date="2009" name="PLoS Biol.">
        <title>Lineage-specific biology revealed by a finished genome assembly of the mouse.</title>
        <authorList>
            <person name="Church D.M."/>
            <person name="Goodstadt L."/>
            <person name="Hillier L.W."/>
            <person name="Zody M.C."/>
            <person name="Goldstein S."/>
            <person name="She X."/>
            <person name="Bult C.J."/>
            <person name="Agarwala R."/>
            <person name="Cherry J.L."/>
            <person name="DiCuccio M."/>
            <person name="Hlavina W."/>
            <person name="Kapustin Y."/>
            <person name="Meric P."/>
            <person name="Maglott D."/>
            <person name="Birtle Z."/>
            <person name="Marques A.C."/>
            <person name="Graves T."/>
            <person name="Zhou S."/>
            <person name="Teague B."/>
            <person name="Potamousis K."/>
            <person name="Churas C."/>
            <person name="Place M."/>
            <person name="Herschleb J."/>
            <person name="Runnheim R."/>
            <person name="Forrest D."/>
            <person name="Amos-Landgraf J."/>
            <person name="Schwartz D.C."/>
            <person name="Cheng Z."/>
            <person name="Lindblad-Toh K."/>
            <person name="Eichler E.E."/>
            <person name="Ponting C.P."/>
        </authorList>
    </citation>
    <scope>NUCLEOTIDE SEQUENCE [LARGE SCALE GENOMIC DNA]</scope>
    <source>
        <strain>C57BL/6J</strain>
    </source>
</reference>
<reference key="3">
    <citation type="journal article" date="2004" name="Genome Res.">
        <title>The status, quality, and expansion of the NIH full-length cDNA project: the Mammalian Gene Collection (MGC).</title>
        <authorList>
            <consortium name="The MGC Project Team"/>
        </authorList>
    </citation>
    <scope>NUCLEOTIDE SEQUENCE [LARGE SCALE MRNA]</scope>
    <source>
        <strain>C3H/He</strain>
        <tissue>Osteoblast</tissue>
    </source>
</reference>
<reference key="4">
    <citation type="journal article" date="2004" name="J. Biol. Chem.">
        <title>Identification of a novel human subfamily of mitochondrial carriers with calcium-binding domains.</title>
        <authorList>
            <person name="del Arco A."/>
            <person name="Satrustegui J."/>
        </authorList>
    </citation>
    <scope>SUBCELLULAR LOCATION</scope>
</reference>
<reference key="5">
    <citation type="journal article" date="2010" name="Cell">
        <title>A tissue-specific atlas of mouse protein phosphorylation and expression.</title>
        <authorList>
            <person name="Huttlin E.L."/>
            <person name="Jedrychowski M.P."/>
            <person name="Elias J.E."/>
            <person name="Goswami T."/>
            <person name="Rad R."/>
            <person name="Beausoleil S.A."/>
            <person name="Villen J."/>
            <person name="Haas W."/>
            <person name="Sowa M.E."/>
            <person name="Gygi S.P."/>
        </authorList>
    </citation>
    <scope>IDENTIFICATION BY MASS SPECTROMETRY [LARGE SCALE ANALYSIS]</scope>
    <source>
        <tissue>Lung</tissue>
        <tissue>Spleen</tissue>
        <tissue>Testis</tissue>
    </source>
</reference>
<reference key="6">
    <citation type="journal article" date="2013" name="Mol. Cell">
        <title>SIRT5-mediated lysine desuccinylation impacts diverse metabolic pathways.</title>
        <authorList>
            <person name="Park J."/>
            <person name="Chen Y."/>
            <person name="Tishkoff D.X."/>
            <person name="Peng C."/>
            <person name="Tan M."/>
            <person name="Dai L."/>
            <person name="Xie Z."/>
            <person name="Zhang Y."/>
            <person name="Zwaans B.M."/>
            <person name="Skinner M.E."/>
            <person name="Lombard D.B."/>
            <person name="Zhao Y."/>
        </authorList>
    </citation>
    <scope>ACETYLATION [LARGE SCALE ANALYSIS] AT LYS-318 AND LYS-435</scope>
    <scope>SUCCINYLATION [LARGE SCALE ANALYSIS] AT LYS-318 AND LYS-435</scope>
    <scope>IDENTIFICATION BY MASS SPECTROMETRY [LARGE SCALE ANALYSIS]</scope>
    <source>
        <tissue>Embryonic fibroblast</tissue>
    </source>
</reference>
<sequence>MLRWLRAFVLPTAACHDAEPPTRYETLFRALDRNGDGVVDIGELQQGLQSLGIPLGQDAEEKIFTTGDVNKDGKLDFEEFMKYLKDHEKKMKLAFKSLDKNNDGKIEPSEIVQSLQMLGLHISEKQAELILQSIDSDGTMTVDWNEWRDYFLFNPVTDIEEIIRFWKHSTGIDIGDSLTIPDEFTEDEKKSGQWWRQLLAGGVAGAVSRTSTAPLDRLKVMMQVHGSKSMNIFGGFRQMVKEGGIRSLWRGNGTNVIKIAPETAVKFWAYEQYKKLLTEEGQKLGTFERFISGSMAGATAQTFIYPMEVLKTRLAVAKTGQYSGIYGCAKKILKHEGFGAFYKGYIPNLLGIIPYAGIDLAVYELLKSYWLDNFAKDSVNPGVMVLLSCGALSSTCGQLASYPLALVRTRMQAQATVEGAPQLSMVGLFQRIVSKEGVSGLYRGITPNFMKVLPAVGISYVVYENMKQTLGVAQK</sequence>
<keyword id="KW-0007">Acetylation</keyword>
<keyword id="KW-0050">Antiport</keyword>
<keyword id="KW-0106">Calcium</keyword>
<keyword id="KW-0472">Membrane</keyword>
<keyword id="KW-0479">Metal-binding</keyword>
<keyword id="KW-0496">Mitochondrion</keyword>
<keyword id="KW-0999">Mitochondrion inner membrane</keyword>
<keyword id="KW-1185">Reference proteome</keyword>
<keyword id="KW-0677">Repeat</keyword>
<keyword id="KW-0812">Transmembrane</keyword>
<keyword id="KW-1133">Transmembrane helix</keyword>
<keyword id="KW-0813">Transport</keyword>
<proteinExistence type="evidence at protein level"/>